<comment type="function">
    <text evidence="1">NAD-binding protein involved in the addition of a carboxymethylaminomethyl (cmnm) group at the wobble position (U34) of certain tRNAs, forming tRNA-cmnm(5)s(2)U34.</text>
</comment>
<comment type="cofactor">
    <cofactor evidence="1">
        <name>FAD</name>
        <dbReference type="ChEBI" id="CHEBI:57692"/>
    </cofactor>
</comment>
<comment type="subunit">
    <text evidence="1">Homodimer. Heterotetramer of two MnmE and two MnmG subunits.</text>
</comment>
<comment type="subcellular location">
    <subcellularLocation>
        <location evidence="1">Cytoplasm</location>
    </subcellularLocation>
</comment>
<comment type="similarity">
    <text evidence="1">Belongs to the MnmG family.</text>
</comment>
<protein>
    <recommendedName>
        <fullName evidence="1">tRNA uridine 5-carboxymethylaminomethyl modification enzyme MnmG</fullName>
    </recommendedName>
    <alternativeName>
        <fullName evidence="1">Glucose-inhibited division protein A</fullName>
    </alternativeName>
</protein>
<proteinExistence type="inferred from homology"/>
<feature type="chain" id="PRO_0000117075" description="tRNA uridine 5-carboxymethylaminomethyl modification enzyme MnmG">
    <location>
        <begin position="1"/>
        <end position="657"/>
    </location>
</feature>
<feature type="region of interest" description="Disordered" evidence="2">
    <location>
        <begin position="636"/>
        <end position="657"/>
    </location>
</feature>
<feature type="binding site" evidence="1">
    <location>
        <begin position="13"/>
        <end position="18"/>
    </location>
    <ligand>
        <name>FAD</name>
        <dbReference type="ChEBI" id="CHEBI:57692"/>
    </ligand>
</feature>
<feature type="binding site" evidence="1">
    <location>
        <begin position="274"/>
        <end position="288"/>
    </location>
    <ligand>
        <name>NAD(+)</name>
        <dbReference type="ChEBI" id="CHEBI:57540"/>
    </ligand>
</feature>
<organism>
    <name type="scientific">Burkholderia mallei (strain ATCC 23344)</name>
    <dbReference type="NCBI Taxonomy" id="243160"/>
    <lineage>
        <taxon>Bacteria</taxon>
        <taxon>Pseudomonadati</taxon>
        <taxon>Pseudomonadota</taxon>
        <taxon>Betaproteobacteria</taxon>
        <taxon>Burkholderiales</taxon>
        <taxon>Burkholderiaceae</taxon>
        <taxon>Burkholderia</taxon>
        <taxon>pseudomallei group</taxon>
    </lineage>
</organism>
<sequence>MLYPTEFDVIVVGGGHAGTEAALASARMGAKTLLLTHNIETLGQMSCNPSIGGIGKGHLVKEVDALGGAMAAATDEGGIQFRILNSSKGPAVRATRAQADRVLYKQAIRRRLENQPNLWLFQQAVDDLMVEGDRVVGAVTQVGVRFRARAVVLTAGTFLDGKIHVGLNHYTGGRAGDPAAVSLSSRLKELNLPQGRLKTGTPPRIDGRTIDFSKLDEQPGDLDPIPVFSFLGRAEQHPQQLPCWVTHTNERTHDIIRSGLDRSPMYTGVIEGVGPRYCPSIEDKIHRFASKDSHQIFLEPEGLTTNEFYPNGISTSLPFDVQLALVHSMRGLEQAHILRPGYAIEYDYFDPRALKSSLETKAIGGLFFAGQINGTTGYEEAAAQGLLAGINAGRYAQEKDAWCPRRDQAYLGVLVDDLVTRGVSEPYRMFTSRAEYRLSLREDNADMRLTEIGRELGVVDDVRWDAFNRKRDAVSRETERLRTTWVTPKTLPADEATALLGKPIDHEYSLAELLRRPGVSYDGVCGLRGGECGPSEPLAEDELLLAQIKEQIEIGIKYQGYIERQAGEIERNGANENTRLPDGIDYTEVRGLSFEVSQKLNQFRPETIGQASRISGMTPAAISLLMVHLKKRGLGRRKGADSVPGADVQADNTAAQQ</sequence>
<name>MNMG_BURMA</name>
<evidence type="ECO:0000255" key="1">
    <source>
        <dbReference type="HAMAP-Rule" id="MF_00129"/>
    </source>
</evidence>
<evidence type="ECO:0000256" key="2">
    <source>
        <dbReference type="SAM" id="MobiDB-lite"/>
    </source>
</evidence>
<gene>
    <name evidence="1" type="primary">mnmG</name>
    <name evidence="1" type="synonym">gidA</name>
    <name type="ordered locus">BMA2944</name>
</gene>
<dbReference type="EMBL" id="CP000010">
    <property type="protein sequence ID" value="AAU48019.1"/>
    <property type="molecule type" value="Genomic_DNA"/>
</dbReference>
<dbReference type="RefSeq" id="WP_004195816.1">
    <property type="nucleotide sequence ID" value="NC_006348.1"/>
</dbReference>
<dbReference type="RefSeq" id="YP_104449.1">
    <property type="nucleotide sequence ID" value="NC_006348.1"/>
</dbReference>
<dbReference type="SMR" id="Q62FS8"/>
<dbReference type="GeneID" id="93062036"/>
<dbReference type="KEGG" id="bma:BMA2944"/>
<dbReference type="PATRIC" id="fig|243160.12.peg.3014"/>
<dbReference type="eggNOG" id="COG0445">
    <property type="taxonomic scope" value="Bacteria"/>
</dbReference>
<dbReference type="HOGENOM" id="CLU_007831_2_2_4"/>
<dbReference type="Proteomes" id="UP000006693">
    <property type="component" value="Chromosome 1"/>
</dbReference>
<dbReference type="GO" id="GO:0005829">
    <property type="term" value="C:cytosol"/>
    <property type="evidence" value="ECO:0007669"/>
    <property type="project" value="TreeGrafter"/>
</dbReference>
<dbReference type="GO" id="GO:0050660">
    <property type="term" value="F:flavin adenine dinucleotide binding"/>
    <property type="evidence" value="ECO:0007669"/>
    <property type="project" value="UniProtKB-UniRule"/>
</dbReference>
<dbReference type="GO" id="GO:0030488">
    <property type="term" value="P:tRNA methylation"/>
    <property type="evidence" value="ECO:0007669"/>
    <property type="project" value="TreeGrafter"/>
</dbReference>
<dbReference type="GO" id="GO:0002098">
    <property type="term" value="P:tRNA wobble uridine modification"/>
    <property type="evidence" value="ECO:0007669"/>
    <property type="project" value="InterPro"/>
</dbReference>
<dbReference type="FunFam" id="1.10.10.1800:FF:000001">
    <property type="entry name" value="tRNA uridine 5-carboxymethylaminomethyl modification enzyme MnmG"/>
    <property type="match status" value="1"/>
</dbReference>
<dbReference type="FunFam" id="1.10.150.570:FF:000001">
    <property type="entry name" value="tRNA uridine 5-carboxymethylaminomethyl modification enzyme MnmG"/>
    <property type="match status" value="1"/>
</dbReference>
<dbReference type="FunFam" id="3.50.50.60:FF:000002">
    <property type="entry name" value="tRNA uridine 5-carboxymethylaminomethyl modification enzyme MnmG"/>
    <property type="match status" value="1"/>
</dbReference>
<dbReference type="FunFam" id="3.50.50.60:FF:000010">
    <property type="entry name" value="tRNA uridine 5-carboxymethylaminomethyl modification enzyme MnmG"/>
    <property type="match status" value="1"/>
</dbReference>
<dbReference type="Gene3D" id="3.50.50.60">
    <property type="entry name" value="FAD/NAD(P)-binding domain"/>
    <property type="match status" value="2"/>
</dbReference>
<dbReference type="Gene3D" id="1.10.150.570">
    <property type="entry name" value="GidA associated domain, C-terminal subdomain"/>
    <property type="match status" value="1"/>
</dbReference>
<dbReference type="Gene3D" id="1.10.10.1800">
    <property type="entry name" value="tRNA uridine 5-carboxymethylaminomethyl modification enzyme MnmG/GidA"/>
    <property type="match status" value="1"/>
</dbReference>
<dbReference type="HAMAP" id="MF_00129">
    <property type="entry name" value="MnmG_GidA"/>
    <property type="match status" value="1"/>
</dbReference>
<dbReference type="InterPro" id="IPR036188">
    <property type="entry name" value="FAD/NAD-bd_sf"/>
</dbReference>
<dbReference type="InterPro" id="IPR049312">
    <property type="entry name" value="GIDA_C_N"/>
</dbReference>
<dbReference type="InterPro" id="IPR004416">
    <property type="entry name" value="MnmG"/>
</dbReference>
<dbReference type="InterPro" id="IPR002218">
    <property type="entry name" value="MnmG-rel"/>
</dbReference>
<dbReference type="InterPro" id="IPR020595">
    <property type="entry name" value="MnmG-rel_CS"/>
</dbReference>
<dbReference type="InterPro" id="IPR026904">
    <property type="entry name" value="MnmG_C"/>
</dbReference>
<dbReference type="InterPro" id="IPR047001">
    <property type="entry name" value="MnmG_C_subdom"/>
</dbReference>
<dbReference type="InterPro" id="IPR044920">
    <property type="entry name" value="MnmG_C_subdom_sf"/>
</dbReference>
<dbReference type="InterPro" id="IPR040131">
    <property type="entry name" value="MnmG_N"/>
</dbReference>
<dbReference type="NCBIfam" id="TIGR00136">
    <property type="entry name" value="mnmG_gidA"/>
    <property type="match status" value="1"/>
</dbReference>
<dbReference type="PANTHER" id="PTHR11806">
    <property type="entry name" value="GLUCOSE INHIBITED DIVISION PROTEIN A"/>
    <property type="match status" value="1"/>
</dbReference>
<dbReference type="PANTHER" id="PTHR11806:SF0">
    <property type="entry name" value="PROTEIN MTO1 HOMOLOG, MITOCHONDRIAL"/>
    <property type="match status" value="1"/>
</dbReference>
<dbReference type="Pfam" id="PF01134">
    <property type="entry name" value="GIDA"/>
    <property type="match status" value="1"/>
</dbReference>
<dbReference type="Pfam" id="PF21680">
    <property type="entry name" value="GIDA_C_1st"/>
    <property type="match status" value="1"/>
</dbReference>
<dbReference type="Pfam" id="PF13932">
    <property type="entry name" value="SAM_GIDA_C"/>
    <property type="match status" value="1"/>
</dbReference>
<dbReference type="SMART" id="SM01228">
    <property type="entry name" value="GIDA_assoc_3"/>
    <property type="match status" value="1"/>
</dbReference>
<dbReference type="SUPFAM" id="SSF51905">
    <property type="entry name" value="FAD/NAD(P)-binding domain"/>
    <property type="match status" value="1"/>
</dbReference>
<dbReference type="PROSITE" id="PS01280">
    <property type="entry name" value="GIDA_1"/>
    <property type="match status" value="1"/>
</dbReference>
<dbReference type="PROSITE" id="PS01281">
    <property type="entry name" value="GIDA_2"/>
    <property type="match status" value="1"/>
</dbReference>
<keyword id="KW-0963">Cytoplasm</keyword>
<keyword id="KW-0274">FAD</keyword>
<keyword id="KW-0285">Flavoprotein</keyword>
<keyword id="KW-0520">NAD</keyword>
<keyword id="KW-1185">Reference proteome</keyword>
<keyword id="KW-0819">tRNA processing</keyword>
<reference key="1">
    <citation type="journal article" date="2004" name="Proc. Natl. Acad. Sci. U.S.A.">
        <title>Structural flexibility in the Burkholderia mallei genome.</title>
        <authorList>
            <person name="Nierman W.C."/>
            <person name="DeShazer D."/>
            <person name="Kim H.S."/>
            <person name="Tettelin H."/>
            <person name="Nelson K.E."/>
            <person name="Feldblyum T.V."/>
            <person name="Ulrich R.L."/>
            <person name="Ronning C.M."/>
            <person name="Brinkac L.M."/>
            <person name="Daugherty S.C."/>
            <person name="Davidsen T.D."/>
            <person name="DeBoy R.T."/>
            <person name="Dimitrov G."/>
            <person name="Dodson R.J."/>
            <person name="Durkin A.S."/>
            <person name="Gwinn M.L."/>
            <person name="Haft D.H."/>
            <person name="Khouri H.M."/>
            <person name="Kolonay J.F."/>
            <person name="Madupu R."/>
            <person name="Mohammoud Y."/>
            <person name="Nelson W.C."/>
            <person name="Radune D."/>
            <person name="Romero C.M."/>
            <person name="Sarria S."/>
            <person name="Selengut J."/>
            <person name="Shamblin C."/>
            <person name="Sullivan S.A."/>
            <person name="White O."/>
            <person name="Yu Y."/>
            <person name="Zafar N."/>
            <person name="Zhou L."/>
            <person name="Fraser C.M."/>
        </authorList>
    </citation>
    <scope>NUCLEOTIDE SEQUENCE [LARGE SCALE GENOMIC DNA]</scope>
    <source>
        <strain>ATCC 23344</strain>
    </source>
</reference>
<accession>Q62FS8</accession>